<protein>
    <recommendedName>
        <fullName evidence="1">Maturase K</fullName>
    </recommendedName>
    <alternativeName>
        <fullName evidence="1">Intron maturase</fullName>
    </alternativeName>
</protein>
<keyword id="KW-0150">Chloroplast</keyword>
<keyword id="KW-0507">mRNA processing</keyword>
<keyword id="KW-0934">Plastid</keyword>
<keyword id="KW-0694">RNA-binding</keyword>
<keyword id="KW-0819">tRNA processing</keyword>
<sequence length="506" mass="60166">MEEFQVYLELDRFRQHDFLYPLIFREYIYALAHDHSLNINNRSGLLENVSSANKYKYSSVIVKRFIFRMYQQNHLIISANDSNQKQFFGHNNNLYYEMISAVFAVIAEIPFSLRLVSSLKGKGPAKSHNLQSIHSIFPFLEDTFSHLNYVLDVLIPYPIHLETLVQTLRYWIKDTSSLHLLRFCLYEYCNWNWKSLITQKKSILNPRLFLFLYNSHVCEYESIFFFLRNQSSHLRSTSFGVLLERILFYGKIEHLIKVFVNDFQDILWLVKDPFMHYIRYQGKSILASKDTPLLMNKWKYYFVSLWQCHFYVWSQSRRVRIKQLSKDYLDFLGYFSSLRFNPLVVRSQMLENSFLIDNAIKKFDTKIPIIPMIGSLAKARFCNALGHPISKPAWADSADSDIIDRFVRICRNLSHYYSGSSKKKNLYRIKYILRLSCVKTLARKHKSTVRTFLKRVGSGFLEEFFTEEEEVLSLIFPRAYSASRKLYRGHIWYLDIICINDLVNHE</sequence>
<proteinExistence type="inferred from homology"/>
<name>MATK_CARPA</name>
<gene>
    <name evidence="1" type="primary">matK</name>
</gene>
<comment type="function">
    <text evidence="1">Usually encoded in the trnK tRNA gene intron. Probably assists in splicing its own and other chloroplast group II introns.</text>
</comment>
<comment type="subcellular location">
    <subcellularLocation>
        <location>Plastid</location>
        <location>Chloroplast</location>
    </subcellularLocation>
</comment>
<comment type="similarity">
    <text evidence="1">Belongs to the intron maturase 2 family. MatK subfamily.</text>
</comment>
<geneLocation type="chloroplast"/>
<organism>
    <name type="scientific">Carica papaya</name>
    <name type="common">Papaya</name>
    <dbReference type="NCBI Taxonomy" id="3649"/>
    <lineage>
        <taxon>Eukaryota</taxon>
        <taxon>Viridiplantae</taxon>
        <taxon>Streptophyta</taxon>
        <taxon>Embryophyta</taxon>
        <taxon>Tracheophyta</taxon>
        <taxon>Spermatophyta</taxon>
        <taxon>Magnoliopsida</taxon>
        <taxon>eudicotyledons</taxon>
        <taxon>Gunneridae</taxon>
        <taxon>Pentapetalae</taxon>
        <taxon>rosids</taxon>
        <taxon>malvids</taxon>
        <taxon>Brassicales</taxon>
        <taxon>Caricaceae</taxon>
        <taxon>Carica</taxon>
    </lineage>
</organism>
<evidence type="ECO:0000255" key="1">
    <source>
        <dbReference type="HAMAP-Rule" id="MF_01390"/>
    </source>
</evidence>
<dbReference type="EMBL" id="EU431223">
    <property type="protein sequence ID" value="ABY86763.1"/>
    <property type="molecule type" value="Genomic_DNA"/>
</dbReference>
<dbReference type="RefSeq" id="YP_001671664.1">
    <property type="nucleotide sequence ID" value="NC_010323.1"/>
</dbReference>
<dbReference type="GeneID" id="5878324"/>
<dbReference type="KEGG" id="cpap:5878324"/>
<dbReference type="OrthoDB" id="1886907at2759"/>
<dbReference type="GO" id="GO:0009507">
    <property type="term" value="C:chloroplast"/>
    <property type="evidence" value="ECO:0007669"/>
    <property type="project" value="UniProtKB-SubCell"/>
</dbReference>
<dbReference type="GO" id="GO:0003723">
    <property type="term" value="F:RNA binding"/>
    <property type="evidence" value="ECO:0007669"/>
    <property type="project" value="UniProtKB-KW"/>
</dbReference>
<dbReference type="GO" id="GO:0006397">
    <property type="term" value="P:mRNA processing"/>
    <property type="evidence" value="ECO:0007669"/>
    <property type="project" value="UniProtKB-KW"/>
</dbReference>
<dbReference type="GO" id="GO:0008380">
    <property type="term" value="P:RNA splicing"/>
    <property type="evidence" value="ECO:0007669"/>
    <property type="project" value="UniProtKB-UniRule"/>
</dbReference>
<dbReference type="GO" id="GO:0008033">
    <property type="term" value="P:tRNA processing"/>
    <property type="evidence" value="ECO:0007669"/>
    <property type="project" value="UniProtKB-KW"/>
</dbReference>
<dbReference type="HAMAP" id="MF_01390">
    <property type="entry name" value="MatK"/>
    <property type="match status" value="1"/>
</dbReference>
<dbReference type="InterPro" id="IPR024937">
    <property type="entry name" value="Domain_X"/>
</dbReference>
<dbReference type="InterPro" id="IPR002866">
    <property type="entry name" value="Maturase_MatK"/>
</dbReference>
<dbReference type="InterPro" id="IPR024942">
    <property type="entry name" value="Maturase_MatK_N"/>
</dbReference>
<dbReference type="PANTHER" id="PTHR34811">
    <property type="entry name" value="MATURASE K"/>
    <property type="match status" value="1"/>
</dbReference>
<dbReference type="PANTHER" id="PTHR34811:SF1">
    <property type="entry name" value="MATURASE K"/>
    <property type="match status" value="1"/>
</dbReference>
<dbReference type="Pfam" id="PF01348">
    <property type="entry name" value="Intron_maturas2"/>
    <property type="match status" value="1"/>
</dbReference>
<dbReference type="Pfam" id="PF01824">
    <property type="entry name" value="MatK_N"/>
    <property type="match status" value="1"/>
</dbReference>
<reference key="1">
    <citation type="journal article" date="2008" name="Nature">
        <title>The draft genome of the transgenic tropical fruit tree papaya (Carica papaya Linnaeus).</title>
        <authorList>
            <person name="Ming R."/>
            <person name="Hou S."/>
            <person name="Feng Y."/>
            <person name="Yu Q."/>
            <person name="Dionne-Laporte A."/>
            <person name="Saw J.H."/>
            <person name="Senin P."/>
            <person name="Wang W."/>
            <person name="Ly B.V."/>
            <person name="Lewis K.L."/>
            <person name="Salzberg S.L."/>
            <person name="Feng L."/>
            <person name="Jones M.R."/>
            <person name="Skelton R.L."/>
            <person name="Murray J.E."/>
            <person name="Chen C."/>
            <person name="Qian W."/>
            <person name="Shen J."/>
            <person name="Du P."/>
            <person name="Eustice M."/>
            <person name="Tong E."/>
            <person name="Tang H."/>
            <person name="Lyons E."/>
            <person name="Paull R.E."/>
            <person name="Michael T.P."/>
            <person name="Wall K."/>
            <person name="Rice D.W."/>
            <person name="Albert H."/>
            <person name="Wang M.L."/>
            <person name="Zhu Y.J."/>
            <person name="Schatz M."/>
            <person name="Nagarajan N."/>
            <person name="Acob R.A."/>
            <person name="Guan P."/>
            <person name="Blas A."/>
            <person name="Wai C.M."/>
            <person name="Ackerman C.M."/>
            <person name="Ren Y."/>
            <person name="Liu C."/>
            <person name="Wang J."/>
            <person name="Wang J."/>
            <person name="Na J.K."/>
            <person name="Shakirov E.V."/>
            <person name="Haas B."/>
            <person name="Thimmapuram J."/>
            <person name="Nelson D."/>
            <person name="Wang X."/>
            <person name="Bowers J.E."/>
            <person name="Gschwend A.R."/>
            <person name="Delcher A.L."/>
            <person name="Singh R."/>
            <person name="Suzuki J.Y."/>
            <person name="Tripathi S."/>
            <person name="Neupane K."/>
            <person name="Wei H."/>
            <person name="Irikura B."/>
            <person name="Paidi M."/>
            <person name="Jiang N."/>
            <person name="Zhang W."/>
            <person name="Presting G."/>
            <person name="Windsor A."/>
            <person name="Navajas-Perez R."/>
            <person name="Torres M.J."/>
            <person name="Feltus F.A."/>
            <person name="Porter B."/>
            <person name="Li Y."/>
            <person name="Burroughs A.M."/>
            <person name="Luo M.C."/>
            <person name="Liu L."/>
            <person name="Christopher D.A."/>
            <person name="Mount S.M."/>
            <person name="Moore P.H."/>
            <person name="Sugimura T."/>
            <person name="Jiang J."/>
            <person name="Schuler M.A."/>
            <person name="Friedman V."/>
            <person name="Mitchell-Olds T."/>
            <person name="Shippen D.E."/>
            <person name="dePamphilis C.W."/>
            <person name="Palmer J.D."/>
            <person name="Freeling M."/>
            <person name="Paterson A.H."/>
            <person name="Gonsalves D."/>
            <person name="Wang L."/>
            <person name="Alam M."/>
        </authorList>
    </citation>
    <scope>NUCLEOTIDE SEQUENCE [LARGE SCALE GENOMIC DNA]</scope>
    <source>
        <strain>cv. SunUp</strain>
    </source>
</reference>
<accession>B1A916</accession>
<feature type="chain" id="PRO_0000355919" description="Maturase K">
    <location>
        <begin position="1"/>
        <end position="506"/>
    </location>
</feature>